<accession>Q9LPZ3</accession>
<dbReference type="EC" id="2.7.11.1"/>
<dbReference type="EMBL" id="AC011661">
    <property type="protein sequence ID" value="AAF16627.1"/>
    <property type="status" value="ALT_SEQ"/>
    <property type="molecule type" value="Genomic_DNA"/>
</dbReference>
<dbReference type="EMBL" id="CP002684">
    <property type="protein sequence ID" value="AEE28733.1"/>
    <property type="molecule type" value="Genomic_DNA"/>
</dbReference>
<dbReference type="RefSeq" id="NP_001318981.1">
    <property type="nucleotide sequence ID" value="NM_001331984.1"/>
</dbReference>
<dbReference type="SMR" id="Q9LPZ3"/>
<dbReference type="BioGRID" id="22923">
    <property type="interactions" value="1"/>
</dbReference>
<dbReference type="FunCoup" id="Q9LPZ3">
    <property type="interactions" value="118"/>
</dbReference>
<dbReference type="IntAct" id="Q9LPZ3">
    <property type="interactions" value="1"/>
</dbReference>
<dbReference type="GlyGen" id="Q9LPZ3">
    <property type="glycosylation" value="8 sites"/>
</dbReference>
<dbReference type="PaxDb" id="3702-AT1G11410.1"/>
<dbReference type="ProteomicsDB" id="243180"/>
<dbReference type="EnsemblPlants" id="AT1G11410.1">
    <property type="protein sequence ID" value="AT1G11410.1"/>
    <property type="gene ID" value="AT1G11410"/>
</dbReference>
<dbReference type="GeneID" id="837683"/>
<dbReference type="Gramene" id="AT1G11410.1">
    <property type="protein sequence ID" value="AT1G11410.1"/>
    <property type="gene ID" value="AT1G11410"/>
</dbReference>
<dbReference type="KEGG" id="ath:AT1G11410"/>
<dbReference type="Araport" id="AT1G11410"/>
<dbReference type="TAIR" id="AT1G11410"/>
<dbReference type="eggNOG" id="ENOG502QUDG">
    <property type="taxonomic scope" value="Eukaryota"/>
</dbReference>
<dbReference type="HOGENOM" id="CLU_000288_116_1_1"/>
<dbReference type="InParanoid" id="Q9LPZ3"/>
<dbReference type="PRO" id="PR:Q9LPZ3"/>
<dbReference type="Proteomes" id="UP000006548">
    <property type="component" value="Chromosome 1"/>
</dbReference>
<dbReference type="ExpressionAtlas" id="Q9LPZ3">
    <property type="expression patterns" value="baseline and differential"/>
</dbReference>
<dbReference type="GO" id="GO:0005886">
    <property type="term" value="C:plasma membrane"/>
    <property type="evidence" value="ECO:0007669"/>
    <property type="project" value="UniProtKB-SubCell"/>
</dbReference>
<dbReference type="GO" id="GO:0005524">
    <property type="term" value="F:ATP binding"/>
    <property type="evidence" value="ECO:0007669"/>
    <property type="project" value="UniProtKB-KW"/>
</dbReference>
<dbReference type="GO" id="GO:0005516">
    <property type="term" value="F:calmodulin binding"/>
    <property type="evidence" value="ECO:0000250"/>
    <property type="project" value="UniProtKB"/>
</dbReference>
<dbReference type="GO" id="GO:0030246">
    <property type="term" value="F:carbohydrate binding"/>
    <property type="evidence" value="ECO:0007669"/>
    <property type="project" value="UniProtKB-KW"/>
</dbReference>
<dbReference type="GO" id="GO:0106310">
    <property type="term" value="F:protein serine kinase activity"/>
    <property type="evidence" value="ECO:0007669"/>
    <property type="project" value="RHEA"/>
</dbReference>
<dbReference type="GO" id="GO:0004674">
    <property type="term" value="F:protein serine/threonine kinase activity"/>
    <property type="evidence" value="ECO:0000250"/>
    <property type="project" value="UniProtKB"/>
</dbReference>
<dbReference type="GO" id="GO:0031625">
    <property type="term" value="F:ubiquitin protein ligase binding"/>
    <property type="evidence" value="ECO:0007669"/>
    <property type="project" value="UniProtKB-ARBA"/>
</dbReference>
<dbReference type="GO" id="GO:0048544">
    <property type="term" value="P:recognition of pollen"/>
    <property type="evidence" value="ECO:0007669"/>
    <property type="project" value="InterPro"/>
</dbReference>
<dbReference type="CDD" id="cd00028">
    <property type="entry name" value="B_lectin"/>
    <property type="match status" value="1"/>
</dbReference>
<dbReference type="CDD" id="cd00054">
    <property type="entry name" value="EGF_CA"/>
    <property type="match status" value="1"/>
</dbReference>
<dbReference type="CDD" id="cd00129">
    <property type="entry name" value="PAN_APPLE"/>
    <property type="match status" value="1"/>
</dbReference>
<dbReference type="CDD" id="cd14066">
    <property type="entry name" value="STKc_IRAK"/>
    <property type="match status" value="1"/>
</dbReference>
<dbReference type="FunFam" id="1.10.510.10:FF:000060">
    <property type="entry name" value="G-type lectin S-receptor-like serine/threonine-protein kinase"/>
    <property type="match status" value="1"/>
</dbReference>
<dbReference type="FunFam" id="2.90.10.10:FF:000005">
    <property type="entry name" value="G-type lectin S-receptor-like serine/threonine-protein kinase"/>
    <property type="match status" value="1"/>
</dbReference>
<dbReference type="FunFam" id="3.30.200.20:FF:000330">
    <property type="entry name" value="G-type lectin S-receptor-like serine/threonine-protein kinase At4g03230"/>
    <property type="match status" value="1"/>
</dbReference>
<dbReference type="Gene3D" id="2.90.10.10">
    <property type="entry name" value="Bulb-type lectin domain"/>
    <property type="match status" value="1"/>
</dbReference>
<dbReference type="Gene3D" id="3.30.200.20">
    <property type="entry name" value="Phosphorylase Kinase, domain 1"/>
    <property type="match status" value="1"/>
</dbReference>
<dbReference type="Gene3D" id="1.10.510.10">
    <property type="entry name" value="Transferase(Phosphotransferase) domain 1"/>
    <property type="match status" value="1"/>
</dbReference>
<dbReference type="InterPro" id="IPR001480">
    <property type="entry name" value="Bulb-type_lectin_dom"/>
</dbReference>
<dbReference type="InterPro" id="IPR036426">
    <property type="entry name" value="Bulb-type_lectin_dom_sf"/>
</dbReference>
<dbReference type="InterPro" id="IPR000742">
    <property type="entry name" value="EGF-like_dom"/>
</dbReference>
<dbReference type="InterPro" id="IPR011009">
    <property type="entry name" value="Kinase-like_dom_sf"/>
</dbReference>
<dbReference type="InterPro" id="IPR003609">
    <property type="entry name" value="Pan_app"/>
</dbReference>
<dbReference type="InterPro" id="IPR000719">
    <property type="entry name" value="Prot_kinase_dom"/>
</dbReference>
<dbReference type="InterPro" id="IPR000858">
    <property type="entry name" value="S_locus_glycoprot_dom"/>
</dbReference>
<dbReference type="InterPro" id="IPR001245">
    <property type="entry name" value="Ser-Thr/Tyr_kinase_cat_dom"/>
</dbReference>
<dbReference type="InterPro" id="IPR008271">
    <property type="entry name" value="Ser/Thr_kinase_AS"/>
</dbReference>
<dbReference type="InterPro" id="IPR024171">
    <property type="entry name" value="SRK-like_kinase"/>
</dbReference>
<dbReference type="PANTHER" id="PTHR27002">
    <property type="entry name" value="RECEPTOR-LIKE SERINE/THREONINE-PROTEIN KINASE SD1-8"/>
    <property type="match status" value="1"/>
</dbReference>
<dbReference type="PANTHER" id="PTHR27002:SF739">
    <property type="entry name" value="RECEPTOR-LIKE SERINE_THREONINE-PROTEIN KINASE"/>
    <property type="match status" value="1"/>
</dbReference>
<dbReference type="Pfam" id="PF01453">
    <property type="entry name" value="B_lectin"/>
    <property type="match status" value="1"/>
</dbReference>
<dbReference type="Pfam" id="PF08276">
    <property type="entry name" value="PAN_2"/>
    <property type="match status" value="1"/>
</dbReference>
<dbReference type="Pfam" id="PF07714">
    <property type="entry name" value="PK_Tyr_Ser-Thr"/>
    <property type="match status" value="1"/>
</dbReference>
<dbReference type="Pfam" id="PF00954">
    <property type="entry name" value="S_locus_glycop"/>
    <property type="match status" value="1"/>
</dbReference>
<dbReference type="PIRSF" id="PIRSF000641">
    <property type="entry name" value="SRK"/>
    <property type="match status" value="1"/>
</dbReference>
<dbReference type="SMART" id="SM00108">
    <property type="entry name" value="B_lectin"/>
    <property type="match status" value="1"/>
</dbReference>
<dbReference type="SMART" id="SM00473">
    <property type="entry name" value="PAN_AP"/>
    <property type="match status" value="1"/>
</dbReference>
<dbReference type="SMART" id="SM00220">
    <property type="entry name" value="S_TKc"/>
    <property type="match status" value="1"/>
</dbReference>
<dbReference type="SUPFAM" id="SSF51110">
    <property type="entry name" value="alpha-D-mannose-specific plant lectins"/>
    <property type="match status" value="1"/>
</dbReference>
<dbReference type="SUPFAM" id="SSF56112">
    <property type="entry name" value="Protein kinase-like (PK-like)"/>
    <property type="match status" value="1"/>
</dbReference>
<dbReference type="PROSITE" id="PS50927">
    <property type="entry name" value="BULB_LECTIN"/>
    <property type="match status" value="1"/>
</dbReference>
<dbReference type="PROSITE" id="PS50026">
    <property type="entry name" value="EGF_3"/>
    <property type="match status" value="1"/>
</dbReference>
<dbReference type="PROSITE" id="PS50948">
    <property type="entry name" value="PAN"/>
    <property type="match status" value="1"/>
</dbReference>
<dbReference type="PROSITE" id="PS50011">
    <property type="entry name" value="PROTEIN_KINASE_DOM"/>
    <property type="match status" value="1"/>
</dbReference>
<dbReference type="PROSITE" id="PS00108">
    <property type="entry name" value="PROTEIN_KINASE_ST"/>
    <property type="match status" value="1"/>
</dbReference>
<sequence length="845" mass="95862">MKFFFIFFIFLFSFLIQSCYSDNTILRSQSLKDGDVIYSEGKRFAFGFFSLGNSKLRYVGIWYAQVSEQTIVWVANRDHPINDTSGLIKFSTRGNLCVYASGNGTEPIWSTDVIDMIQEPALVAKLSDLGNLVLLDPVTGKSFWESFNHPTNTLLPFMKFGFTRQSGVDRIMTSWRSPGDPGSGNITYRIERRGFPQMMMYKGLTLWWRTGSWTGQRWSGVPEMTNKFIFNISFVNNPDEVSITYGVLDASVTTRMVLNETGTLQRFRWNGRDKKWIGFWSAPEDKCDIYNHCGFNGYCDSTSTEKFECSCLPGYEPKTPRDWFLRDASDGCTRIKADSICNGKEGFAKLKRVKIPNTSAVNVDMNITLKECEQRCLKNCSCVAYASAYHESQDGAKGCLTWHGNMLDTRTYLSSGQDFYLRVDKSELARWNGNGASGKKRLVLILISLIAVVMLLLISFHCYLRKRRQRTQSNRLRKAPSSFAPSSFDLEDSFILEELEDKSRSRELPLFELSTIATATNNFAFQNKLGAGGFGPVYKGVLQNGMEIAVKRLSKSSGQGMEEFKNEVKLISKLQHRNLVRILGCCVEFEEKMLVYEYLPNKSLDYFIFHEEQRAELDWPKRMGIIRGIGRGILYLHQDSRLRIIHRDLKASNVLLDNEMIPKIADFGLARIFGGNQIEGSTNRVVGTYGYMSPEYAMDGQFSIKSDVYSFGVLILEIITGKRNSAFYEESLNLVKHIWDRWENGEAIEIIDKLMGEETYDEGEVMKCLHIGLLCVQENSSDRPDMSSVVFMLGHNAIDLPSPKHPAFTAGRRRNTKTGGSSDNWPSGETSSTINDVTLTDVQGR</sequence>
<keyword id="KW-0067">ATP-binding</keyword>
<keyword id="KW-1003">Cell membrane</keyword>
<keyword id="KW-1015">Disulfide bond</keyword>
<keyword id="KW-0245">EGF-like domain</keyword>
<keyword id="KW-0325">Glycoprotein</keyword>
<keyword id="KW-0418">Kinase</keyword>
<keyword id="KW-0430">Lectin</keyword>
<keyword id="KW-0472">Membrane</keyword>
<keyword id="KW-0547">Nucleotide-binding</keyword>
<keyword id="KW-0675">Receptor</keyword>
<keyword id="KW-1185">Reference proteome</keyword>
<keyword id="KW-0723">Serine/threonine-protein kinase</keyword>
<keyword id="KW-0732">Signal</keyword>
<keyword id="KW-0808">Transferase</keyword>
<keyword id="KW-0812">Transmembrane</keyword>
<keyword id="KW-1133">Transmembrane helix</keyword>
<evidence type="ECO:0000250" key="1"/>
<evidence type="ECO:0000255" key="2"/>
<evidence type="ECO:0000255" key="3">
    <source>
        <dbReference type="PROSITE-ProRule" id="PRU00038"/>
    </source>
</evidence>
<evidence type="ECO:0000255" key="4">
    <source>
        <dbReference type="PROSITE-ProRule" id="PRU00076"/>
    </source>
</evidence>
<evidence type="ECO:0000255" key="5">
    <source>
        <dbReference type="PROSITE-ProRule" id="PRU00159"/>
    </source>
</evidence>
<evidence type="ECO:0000255" key="6">
    <source>
        <dbReference type="PROSITE-ProRule" id="PRU00315"/>
    </source>
</evidence>
<evidence type="ECO:0000255" key="7">
    <source>
        <dbReference type="PROSITE-ProRule" id="PRU10027"/>
    </source>
</evidence>
<evidence type="ECO:0000256" key="8">
    <source>
        <dbReference type="SAM" id="MobiDB-lite"/>
    </source>
</evidence>
<evidence type="ECO:0000305" key="9"/>
<proteinExistence type="inferred from homology"/>
<organism>
    <name type="scientific">Arabidopsis thaliana</name>
    <name type="common">Mouse-ear cress</name>
    <dbReference type="NCBI Taxonomy" id="3702"/>
    <lineage>
        <taxon>Eukaryota</taxon>
        <taxon>Viridiplantae</taxon>
        <taxon>Streptophyta</taxon>
        <taxon>Embryophyta</taxon>
        <taxon>Tracheophyta</taxon>
        <taxon>Spermatophyta</taxon>
        <taxon>Magnoliopsida</taxon>
        <taxon>eudicotyledons</taxon>
        <taxon>Gunneridae</taxon>
        <taxon>Pentapetalae</taxon>
        <taxon>rosids</taxon>
        <taxon>malvids</taxon>
        <taxon>Brassicales</taxon>
        <taxon>Brassicaceae</taxon>
        <taxon>Camelineae</taxon>
        <taxon>Arabidopsis</taxon>
    </lineage>
</organism>
<gene>
    <name type="ordered locus">At1g11410</name>
    <name type="ORF">T23J18.8</name>
</gene>
<protein>
    <recommendedName>
        <fullName>G-type lectin S-receptor-like serine/threonine-protein kinase At1g11410</fullName>
        <ecNumber>2.7.11.1</ecNumber>
    </recommendedName>
</protein>
<reference key="1">
    <citation type="journal article" date="2000" name="Nature">
        <title>Sequence and analysis of chromosome 1 of the plant Arabidopsis thaliana.</title>
        <authorList>
            <person name="Theologis A."/>
            <person name="Ecker J.R."/>
            <person name="Palm C.J."/>
            <person name="Federspiel N.A."/>
            <person name="Kaul S."/>
            <person name="White O."/>
            <person name="Alonso J."/>
            <person name="Altafi H."/>
            <person name="Araujo R."/>
            <person name="Bowman C.L."/>
            <person name="Brooks S.Y."/>
            <person name="Buehler E."/>
            <person name="Chan A."/>
            <person name="Chao Q."/>
            <person name="Chen H."/>
            <person name="Cheuk R.F."/>
            <person name="Chin C.W."/>
            <person name="Chung M.K."/>
            <person name="Conn L."/>
            <person name="Conway A.B."/>
            <person name="Conway A.R."/>
            <person name="Creasy T.H."/>
            <person name="Dewar K."/>
            <person name="Dunn P."/>
            <person name="Etgu P."/>
            <person name="Feldblyum T.V."/>
            <person name="Feng J.-D."/>
            <person name="Fong B."/>
            <person name="Fujii C.Y."/>
            <person name="Gill J.E."/>
            <person name="Goldsmith A.D."/>
            <person name="Haas B."/>
            <person name="Hansen N.F."/>
            <person name="Hughes B."/>
            <person name="Huizar L."/>
            <person name="Hunter J.L."/>
            <person name="Jenkins J."/>
            <person name="Johnson-Hopson C."/>
            <person name="Khan S."/>
            <person name="Khaykin E."/>
            <person name="Kim C.J."/>
            <person name="Koo H.L."/>
            <person name="Kremenetskaia I."/>
            <person name="Kurtz D.B."/>
            <person name="Kwan A."/>
            <person name="Lam B."/>
            <person name="Langin-Hooper S."/>
            <person name="Lee A."/>
            <person name="Lee J.M."/>
            <person name="Lenz C.A."/>
            <person name="Li J.H."/>
            <person name="Li Y.-P."/>
            <person name="Lin X."/>
            <person name="Liu S.X."/>
            <person name="Liu Z.A."/>
            <person name="Luros J.S."/>
            <person name="Maiti R."/>
            <person name="Marziali A."/>
            <person name="Militscher J."/>
            <person name="Miranda M."/>
            <person name="Nguyen M."/>
            <person name="Nierman W.C."/>
            <person name="Osborne B.I."/>
            <person name="Pai G."/>
            <person name="Peterson J."/>
            <person name="Pham P.K."/>
            <person name="Rizzo M."/>
            <person name="Rooney T."/>
            <person name="Rowley D."/>
            <person name="Sakano H."/>
            <person name="Salzberg S.L."/>
            <person name="Schwartz J.R."/>
            <person name="Shinn P."/>
            <person name="Southwick A.M."/>
            <person name="Sun H."/>
            <person name="Tallon L.J."/>
            <person name="Tambunga G."/>
            <person name="Toriumi M.J."/>
            <person name="Town C.D."/>
            <person name="Utterback T."/>
            <person name="Van Aken S."/>
            <person name="Vaysberg M."/>
            <person name="Vysotskaia V.S."/>
            <person name="Walker M."/>
            <person name="Wu D."/>
            <person name="Yu G."/>
            <person name="Fraser C.M."/>
            <person name="Venter J.C."/>
            <person name="Davis R.W."/>
        </authorList>
    </citation>
    <scope>NUCLEOTIDE SEQUENCE [LARGE SCALE GENOMIC DNA]</scope>
    <source>
        <strain>cv. Columbia</strain>
    </source>
</reference>
<reference key="2">
    <citation type="journal article" date="2017" name="Plant J.">
        <title>Araport11: a complete reannotation of the Arabidopsis thaliana reference genome.</title>
        <authorList>
            <person name="Cheng C.Y."/>
            <person name="Krishnakumar V."/>
            <person name="Chan A.P."/>
            <person name="Thibaud-Nissen F."/>
            <person name="Schobel S."/>
            <person name="Town C.D."/>
        </authorList>
    </citation>
    <scope>GENOME REANNOTATION</scope>
    <source>
        <strain>cv. Columbia</strain>
    </source>
</reference>
<feature type="signal peptide" evidence="2">
    <location>
        <begin position="1"/>
        <end position="21"/>
    </location>
</feature>
<feature type="chain" id="PRO_0000401310" description="G-type lectin S-receptor-like serine/threonine-protein kinase At1g11410">
    <location>
        <begin position="22"/>
        <end position="845"/>
    </location>
</feature>
<feature type="topological domain" description="Extracellular" evidence="2">
    <location>
        <begin position="22"/>
        <end position="441"/>
    </location>
</feature>
<feature type="transmembrane region" description="Helical" evidence="2">
    <location>
        <begin position="442"/>
        <end position="462"/>
    </location>
</feature>
<feature type="topological domain" description="Cytoplasmic" evidence="2">
    <location>
        <begin position="463"/>
        <end position="845"/>
    </location>
</feature>
<feature type="domain" description="Bulb-type lectin" evidence="3">
    <location>
        <begin position="22"/>
        <end position="147"/>
    </location>
</feature>
<feature type="domain" description="EGF-like" evidence="4">
    <location>
        <begin position="283"/>
        <end position="321"/>
    </location>
</feature>
<feature type="domain" description="PAN" evidence="6">
    <location>
        <begin position="341"/>
        <end position="424"/>
    </location>
</feature>
<feature type="domain" description="Protein kinase" evidence="5">
    <location>
        <begin position="523"/>
        <end position="808"/>
    </location>
</feature>
<feature type="region of interest" description="CaM-binding" evidence="1">
    <location>
        <begin position="612"/>
        <end position="629"/>
    </location>
</feature>
<feature type="region of interest" description="Disordered" evidence="8">
    <location>
        <begin position="803"/>
        <end position="845"/>
    </location>
</feature>
<feature type="compositionally biased region" description="Polar residues" evidence="8">
    <location>
        <begin position="817"/>
        <end position="845"/>
    </location>
</feature>
<feature type="active site" description="Proton acceptor" evidence="5 7">
    <location>
        <position position="648"/>
    </location>
</feature>
<feature type="binding site" evidence="5">
    <location>
        <begin position="529"/>
        <end position="537"/>
    </location>
    <ligand>
        <name>ATP</name>
        <dbReference type="ChEBI" id="CHEBI:30616"/>
    </ligand>
</feature>
<feature type="binding site" evidence="5">
    <location>
        <position position="551"/>
    </location>
    <ligand>
        <name>ATP</name>
        <dbReference type="ChEBI" id="CHEBI:30616"/>
    </ligand>
</feature>
<feature type="glycosylation site" description="N-linked (GlcNAc...) asparagine" evidence="2">
    <location>
        <position position="82"/>
    </location>
</feature>
<feature type="glycosylation site" description="N-linked (GlcNAc...) asparagine" evidence="2">
    <location>
        <position position="103"/>
    </location>
</feature>
<feature type="glycosylation site" description="N-linked (GlcNAc...) asparagine" evidence="2">
    <location>
        <position position="185"/>
    </location>
</feature>
<feature type="glycosylation site" description="N-linked (GlcNAc...) asparagine" evidence="2">
    <location>
        <position position="231"/>
    </location>
</feature>
<feature type="glycosylation site" description="N-linked (GlcNAc...) asparagine" evidence="2">
    <location>
        <position position="259"/>
    </location>
</feature>
<feature type="glycosylation site" description="N-linked (GlcNAc...) asparagine" evidence="2">
    <location>
        <position position="357"/>
    </location>
</feature>
<feature type="glycosylation site" description="N-linked (GlcNAc...) asparagine" evidence="2">
    <location>
        <position position="366"/>
    </location>
</feature>
<feature type="glycosylation site" description="N-linked (GlcNAc...) asparagine" evidence="2">
    <location>
        <position position="379"/>
    </location>
</feature>
<feature type="disulfide bond" evidence="1">
    <location>
        <begin position="287"/>
        <end position="299"/>
    </location>
</feature>
<feature type="disulfide bond" evidence="1">
    <location>
        <begin position="293"/>
        <end position="309"/>
    </location>
</feature>
<feature type="disulfide bond" evidence="1">
    <location>
        <begin position="372"/>
        <end position="399"/>
    </location>
</feature>
<feature type="disulfide bond" evidence="1">
    <location>
        <begin position="376"/>
        <end position="382"/>
    </location>
</feature>
<comment type="catalytic activity">
    <reaction>
        <text>L-seryl-[protein] + ATP = O-phospho-L-seryl-[protein] + ADP + H(+)</text>
        <dbReference type="Rhea" id="RHEA:17989"/>
        <dbReference type="Rhea" id="RHEA-COMP:9863"/>
        <dbReference type="Rhea" id="RHEA-COMP:11604"/>
        <dbReference type="ChEBI" id="CHEBI:15378"/>
        <dbReference type="ChEBI" id="CHEBI:29999"/>
        <dbReference type="ChEBI" id="CHEBI:30616"/>
        <dbReference type="ChEBI" id="CHEBI:83421"/>
        <dbReference type="ChEBI" id="CHEBI:456216"/>
        <dbReference type="EC" id="2.7.11.1"/>
    </reaction>
</comment>
<comment type="catalytic activity">
    <reaction>
        <text>L-threonyl-[protein] + ATP = O-phospho-L-threonyl-[protein] + ADP + H(+)</text>
        <dbReference type="Rhea" id="RHEA:46608"/>
        <dbReference type="Rhea" id="RHEA-COMP:11060"/>
        <dbReference type="Rhea" id="RHEA-COMP:11605"/>
        <dbReference type="ChEBI" id="CHEBI:15378"/>
        <dbReference type="ChEBI" id="CHEBI:30013"/>
        <dbReference type="ChEBI" id="CHEBI:30616"/>
        <dbReference type="ChEBI" id="CHEBI:61977"/>
        <dbReference type="ChEBI" id="CHEBI:456216"/>
        <dbReference type="EC" id="2.7.11.1"/>
    </reaction>
</comment>
<comment type="subcellular location">
    <subcellularLocation>
        <location evidence="1">Cell membrane</location>
        <topology evidence="1">Single-pass type I membrane protein</topology>
    </subcellularLocation>
</comment>
<comment type="similarity">
    <text evidence="5">Belongs to the protein kinase superfamily. Ser/Thr protein kinase family.</text>
</comment>
<comment type="sequence caution" evidence="9">
    <conflict type="erroneous gene model prediction">
        <sequence resource="EMBL-CDS" id="AAF16627"/>
    </conflict>
</comment>
<name>Y1141_ARATH</name>